<sequence length="446" mass="48898">MKLFGTDGVRGKAGEKLTAFSAMKLGLAAGIYFRKQSKTNKILVGKDTRRSGYMIENALVSGLTAVGYNVIQIGPMPTPAIAYLTEDMRCDAGIMISASHNPFDDNGIKFFNRFGFKLDEEAEREIEAIYADEALLEASQKSGKEIGASKRIDDVVGRYIVHIKNSFPKELSLHGVRMVLDTANGAAYKVAPTIFSELGAEVFVINDAPNGHNINESCGATQPLMLSEEVKRVRADIGFALDGDADRLVVVDERGEVVDGDKLIGALAMHLKNSHTLEKPLAVATVMSNLALEEFLAKAKIKLLRAGVGDKYVLEMMQKEGANFGGEQSGHLIFSDFAKTGDGLVSALQTMAFVLRSGERASRALNIFDLYPQKLVNLPIKQKKELKEIEGFEALMSEIESQGFRQLIRYSGTENKLRILLEGKDGRALEKWMERCVEFFKATLGG</sequence>
<reference key="1">
    <citation type="journal article" date="2003" name="Proc. Natl. Acad. Sci. U.S.A.">
        <title>Complete genome sequence and analysis of Wolinella succinogenes.</title>
        <authorList>
            <person name="Baar C."/>
            <person name="Eppinger M."/>
            <person name="Raddatz G."/>
            <person name="Simon J."/>
            <person name="Lanz C."/>
            <person name="Klimmek O."/>
            <person name="Nandakumar R."/>
            <person name="Gross R."/>
            <person name="Rosinus A."/>
            <person name="Keller H."/>
            <person name="Jagtap P."/>
            <person name="Linke B."/>
            <person name="Meyer F."/>
            <person name="Lederer H."/>
            <person name="Schuster S.C."/>
        </authorList>
    </citation>
    <scope>NUCLEOTIDE SEQUENCE [LARGE SCALE GENOMIC DNA]</scope>
    <source>
        <strain>ATCC 29543 / DSM 1740 / CCUG 13145 / JCM 31913 / LMG 7466 / NCTC 11488 / FDC 602W</strain>
    </source>
</reference>
<dbReference type="EC" id="5.4.2.10" evidence="1"/>
<dbReference type="EMBL" id="BX571659">
    <property type="protein sequence ID" value="CAE09931.1"/>
    <property type="molecule type" value="Genomic_DNA"/>
</dbReference>
<dbReference type="RefSeq" id="WP_011138728.1">
    <property type="nucleotide sequence ID" value="NC_005090.1"/>
</dbReference>
<dbReference type="SMR" id="Q7M9M2"/>
<dbReference type="STRING" id="273121.WS0818"/>
<dbReference type="DNASU" id="2553536"/>
<dbReference type="KEGG" id="wsu:WS0818"/>
<dbReference type="eggNOG" id="COG1109">
    <property type="taxonomic scope" value="Bacteria"/>
</dbReference>
<dbReference type="HOGENOM" id="CLU_016950_7_0_7"/>
<dbReference type="Proteomes" id="UP000000422">
    <property type="component" value="Chromosome"/>
</dbReference>
<dbReference type="GO" id="GO:0005829">
    <property type="term" value="C:cytosol"/>
    <property type="evidence" value="ECO:0007669"/>
    <property type="project" value="TreeGrafter"/>
</dbReference>
<dbReference type="GO" id="GO:0000287">
    <property type="term" value="F:magnesium ion binding"/>
    <property type="evidence" value="ECO:0007669"/>
    <property type="project" value="UniProtKB-UniRule"/>
</dbReference>
<dbReference type="GO" id="GO:0008966">
    <property type="term" value="F:phosphoglucosamine mutase activity"/>
    <property type="evidence" value="ECO:0007669"/>
    <property type="project" value="UniProtKB-UniRule"/>
</dbReference>
<dbReference type="GO" id="GO:0004615">
    <property type="term" value="F:phosphomannomutase activity"/>
    <property type="evidence" value="ECO:0007669"/>
    <property type="project" value="TreeGrafter"/>
</dbReference>
<dbReference type="GO" id="GO:0005975">
    <property type="term" value="P:carbohydrate metabolic process"/>
    <property type="evidence" value="ECO:0007669"/>
    <property type="project" value="InterPro"/>
</dbReference>
<dbReference type="GO" id="GO:0009252">
    <property type="term" value="P:peptidoglycan biosynthetic process"/>
    <property type="evidence" value="ECO:0007669"/>
    <property type="project" value="TreeGrafter"/>
</dbReference>
<dbReference type="GO" id="GO:0006048">
    <property type="term" value="P:UDP-N-acetylglucosamine biosynthetic process"/>
    <property type="evidence" value="ECO:0007669"/>
    <property type="project" value="TreeGrafter"/>
</dbReference>
<dbReference type="CDD" id="cd05802">
    <property type="entry name" value="GlmM"/>
    <property type="match status" value="1"/>
</dbReference>
<dbReference type="FunFam" id="3.40.120.10:FF:000001">
    <property type="entry name" value="Phosphoglucosamine mutase"/>
    <property type="match status" value="1"/>
</dbReference>
<dbReference type="FunFam" id="3.40.120.10:FF:000003">
    <property type="entry name" value="Phosphoglucosamine mutase"/>
    <property type="match status" value="1"/>
</dbReference>
<dbReference type="Gene3D" id="3.40.120.10">
    <property type="entry name" value="Alpha-D-Glucose-1,6-Bisphosphate, subunit A, domain 3"/>
    <property type="match status" value="3"/>
</dbReference>
<dbReference type="Gene3D" id="3.30.310.50">
    <property type="entry name" value="Alpha-D-phosphohexomutase, C-terminal domain"/>
    <property type="match status" value="1"/>
</dbReference>
<dbReference type="HAMAP" id="MF_01554_B">
    <property type="entry name" value="GlmM_B"/>
    <property type="match status" value="1"/>
</dbReference>
<dbReference type="InterPro" id="IPR005844">
    <property type="entry name" value="A-D-PHexomutase_a/b/a-I"/>
</dbReference>
<dbReference type="InterPro" id="IPR016055">
    <property type="entry name" value="A-D-PHexomutase_a/b/a-I/II/III"/>
</dbReference>
<dbReference type="InterPro" id="IPR005845">
    <property type="entry name" value="A-D-PHexomutase_a/b/a-II"/>
</dbReference>
<dbReference type="InterPro" id="IPR005846">
    <property type="entry name" value="A-D-PHexomutase_a/b/a-III"/>
</dbReference>
<dbReference type="InterPro" id="IPR005843">
    <property type="entry name" value="A-D-PHexomutase_C"/>
</dbReference>
<dbReference type="InterPro" id="IPR036900">
    <property type="entry name" value="A-D-PHexomutase_C_sf"/>
</dbReference>
<dbReference type="InterPro" id="IPR016066">
    <property type="entry name" value="A-D-PHexomutase_CS"/>
</dbReference>
<dbReference type="InterPro" id="IPR005841">
    <property type="entry name" value="Alpha-D-phosphohexomutase_SF"/>
</dbReference>
<dbReference type="InterPro" id="IPR006352">
    <property type="entry name" value="GlmM_bact"/>
</dbReference>
<dbReference type="InterPro" id="IPR050060">
    <property type="entry name" value="Phosphoglucosamine_mutase"/>
</dbReference>
<dbReference type="NCBIfam" id="TIGR01455">
    <property type="entry name" value="glmM"/>
    <property type="match status" value="1"/>
</dbReference>
<dbReference type="NCBIfam" id="NF008139">
    <property type="entry name" value="PRK10887.1"/>
    <property type="match status" value="1"/>
</dbReference>
<dbReference type="PANTHER" id="PTHR42946:SF1">
    <property type="entry name" value="PHOSPHOGLUCOMUTASE (ALPHA-D-GLUCOSE-1,6-BISPHOSPHATE-DEPENDENT)"/>
    <property type="match status" value="1"/>
</dbReference>
<dbReference type="PANTHER" id="PTHR42946">
    <property type="entry name" value="PHOSPHOHEXOSE MUTASE"/>
    <property type="match status" value="1"/>
</dbReference>
<dbReference type="Pfam" id="PF02878">
    <property type="entry name" value="PGM_PMM_I"/>
    <property type="match status" value="1"/>
</dbReference>
<dbReference type="Pfam" id="PF02879">
    <property type="entry name" value="PGM_PMM_II"/>
    <property type="match status" value="1"/>
</dbReference>
<dbReference type="Pfam" id="PF02880">
    <property type="entry name" value="PGM_PMM_III"/>
    <property type="match status" value="1"/>
</dbReference>
<dbReference type="Pfam" id="PF00408">
    <property type="entry name" value="PGM_PMM_IV"/>
    <property type="match status" value="1"/>
</dbReference>
<dbReference type="PRINTS" id="PR00509">
    <property type="entry name" value="PGMPMM"/>
</dbReference>
<dbReference type="SUPFAM" id="SSF55957">
    <property type="entry name" value="Phosphoglucomutase, C-terminal domain"/>
    <property type="match status" value="1"/>
</dbReference>
<dbReference type="SUPFAM" id="SSF53738">
    <property type="entry name" value="Phosphoglucomutase, first 3 domains"/>
    <property type="match status" value="3"/>
</dbReference>
<dbReference type="PROSITE" id="PS00710">
    <property type="entry name" value="PGM_PMM"/>
    <property type="match status" value="1"/>
</dbReference>
<accession>Q7M9M2</accession>
<keyword id="KW-0413">Isomerase</keyword>
<keyword id="KW-0460">Magnesium</keyword>
<keyword id="KW-0479">Metal-binding</keyword>
<keyword id="KW-0597">Phosphoprotein</keyword>
<keyword id="KW-1185">Reference proteome</keyword>
<evidence type="ECO:0000255" key="1">
    <source>
        <dbReference type="HAMAP-Rule" id="MF_01554"/>
    </source>
</evidence>
<feature type="chain" id="PRO_0000148002" description="Phosphoglucosamine mutase">
    <location>
        <begin position="1"/>
        <end position="446"/>
    </location>
</feature>
<feature type="active site" description="Phosphoserine intermediate" evidence="1">
    <location>
        <position position="99"/>
    </location>
</feature>
<feature type="binding site" description="via phosphate group" evidence="1">
    <location>
        <position position="99"/>
    </location>
    <ligand>
        <name>Mg(2+)</name>
        <dbReference type="ChEBI" id="CHEBI:18420"/>
    </ligand>
</feature>
<feature type="binding site" evidence="1">
    <location>
        <position position="242"/>
    </location>
    <ligand>
        <name>Mg(2+)</name>
        <dbReference type="ChEBI" id="CHEBI:18420"/>
    </ligand>
</feature>
<feature type="binding site" evidence="1">
    <location>
        <position position="244"/>
    </location>
    <ligand>
        <name>Mg(2+)</name>
        <dbReference type="ChEBI" id="CHEBI:18420"/>
    </ligand>
</feature>
<feature type="binding site" evidence="1">
    <location>
        <position position="246"/>
    </location>
    <ligand>
        <name>Mg(2+)</name>
        <dbReference type="ChEBI" id="CHEBI:18420"/>
    </ligand>
</feature>
<feature type="modified residue" description="Phosphoserine" evidence="1">
    <location>
        <position position="99"/>
    </location>
</feature>
<name>GLMM_WOLSU</name>
<comment type="function">
    <text evidence="1">Catalyzes the conversion of glucosamine-6-phosphate to glucosamine-1-phosphate.</text>
</comment>
<comment type="catalytic activity">
    <reaction evidence="1">
        <text>alpha-D-glucosamine 1-phosphate = D-glucosamine 6-phosphate</text>
        <dbReference type="Rhea" id="RHEA:23424"/>
        <dbReference type="ChEBI" id="CHEBI:58516"/>
        <dbReference type="ChEBI" id="CHEBI:58725"/>
        <dbReference type="EC" id="5.4.2.10"/>
    </reaction>
</comment>
<comment type="cofactor">
    <cofactor evidence="1">
        <name>Mg(2+)</name>
        <dbReference type="ChEBI" id="CHEBI:18420"/>
    </cofactor>
    <text evidence="1">Binds 1 Mg(2+) ion per subunit.</text>
</comment>
<comment type="PTM">
    <text evidence="1">Activated by phosphorylation.</text>
</comment>
<comment type="similarity">
    <text evidence="1">Belongs to the phosphohexose mutase family.</text>
</comment>
<gene>
    <name evidence="1" type="primary">glmM</name>
    <name type="ordered locus">WS0818</name>
</gene>
<proteinExistence type="inferred from homology"/>
<organism>
    <name type="scientific">Wolinella succinogenes (strain ATCC 29543 / DSM 1740 / CCUG 13145 / JCM 31913 / LMG 7466 / NCTC 11488 / FDC 602W)</name>
    <name type="common">Vibrio succinogenes</name>
    <dbReference type="NCBI Taxonomy" id="273121"/>
    <lineage>
        <taxon>Bacteria</taxon>
        <taxon>Pseudomonadati</taxon>
        <taxon>Campylobacterota</taxon>
        <taxon>Epsilonproteobacteria</taxon>
        <taxon>Campylobacterales</taxon>
        <taxon>Helicobacteraceae</taxon>
        <taxon>Wolinella</taxon>
    </lineage>
</organism>
<protein>
    <recommendedName>
        <fullName evidence="1">Phosphoglucosamine mutase</fullName>
        <ecNumber evidence="1">5.4.2.10</ecNumber>
    </recommendedName>
</protein>